<organism>
    <name type="scientific">Campylobacter jejuni subsp. doylei (strain ATCC BAA-1458 / RM4099 / 269.97)</name>
    <dbReference type="NCBI Taxonomy" id="360109"/>
    <lineage>
        <taxon>Bacteria</taxon>
        <taxon>Pseudomonadati</taxon>
        <taxon>Campylobacterota</taxon>
        <taxon>Epsilonproteobacteria</taxon>
        <taxon>Campylobacterales</taxon>
        <taxon>Campylobacteraceae</taxon>
        <taxon>Campylobacter</taxon>
    </lineage>
</organism>
<name>ATPG_CAMJD</name>
<sequence length="294" mass="33735">MSNLKEIKRKIKSVHNTQKTTNAMKLVSTAKLKKTEEAAKRSKIYAQKIDEILSEISFQINKIVHNEDDMRLSLFHKKEQIKTVDLIFITADKGLCGGFNIKTLKTVSEMLKEYEAKNINIRLRAIGKTGIEYFNFQKIELLEKYFHLSSSPDYEKACEVIHAAVDDFLNGNTDEVILVHNGYKNMITQELKINHLIPVEPKSIEQTHNSLLELEPEGIELLEDLMKTYFEYNMYYALIDSLAAEHSARMQAMDNATNNAKARVKQLNLAYNKARQESITTELIEIISGVESMK</sequence>
<feature type="chain" id="PRO_1000053183" description="ATP synthase gamma chain">
    <location>
        <begin position="1"/>
        <end position="294"/>
    </location>
</feature>
<evidence type="ECO:0000255" key="1">
    <source>
        <dbReference type="HAMAP-Rule" id="MF_00815"/>
    </source>
</evidence>
<proteinExistence type="inferred from homology"/>
<keyword id="KW-0066">ATP synthesis</keyword>
<keyword id="KW-0997">Cell inner membrane</keyword>
<keyword id="KW-1003">Cell membrane</keyword>
<keyword id="KW-0139">CF(1)</keyword>
<keyword id="KW-0375">Hydrogen ion transport</keyword>
<keyword id="KW-0406">Ion transport</keyword>
<keyword id="KW-0472">Membrane</keyword>
<keyword id="KW-0813">Transport</keyword>
<protein>
    <recommendedName>
        <fullName evidence="1">ATP synthase gamma chain</fullName>
    </recommendedName>
    <alternativeName>
        <fullName evidence="1">ATP synthase F1 sector gamma subunit</fullName>
    </alternativeName>
    <alternativeName>
        <fullName evidence="1">F-ATPase gamma subunit</fullName>
    </alternativeName>
</protein>
<gene>
    <name evidence="1" type="primary">atpG</name>
    <name type="ordered locus">JJD26997_0113</name>
</gene>
<comment type="function">
    <text evidence="1">Produces ATP from ADP in the presence of a proton gradient across the membrane. The gamma chain is believed to be important in regulating ATPase activity and the flow of protons through the CF(0) complex.</text>
</comment>
<comment type="subunit">
    <text evidence="1">F-type ATPases have 2 components, CF(1) - the catalytic core - and CF(0) - the membrane proton channel. CF(1) has five subunits: alpha(3), beta(3), gamma(1), delta(1), epsilon(1). CF(0) has three main subunits: a, b and c.</text>
</comment>
<comment type="subcellular location">
    <subcellularLocation>
        <location evidence="1">Cell inner membrane</location>
        <topology evidence="1">Peripheral membrane protein</topology>
    </subcellularLocation>
</comment>
<comment type="similarity">
    <text evidence="1">Belongs to the ATPase gamma chain family.</text>
</comment>
<accession>A7H1I0</accession>
<reference key="1">
    <citation type="submission" date="2007-07" db="EMBL/GenBank/DDBJ databases">
        <title>Complete genome sequence of Campylobacter jejuni subsp doylei 269.97 isolated from human blood.</title>
        <authorList>
            <person name="Fouts D.E."/>
            <person name="Mongodin E.F."/>
            <person name="Puiu D."/>
            <person name="Sebastian Y."/>
            <person name="Miller W.G."/>
            <person name="Mandrell R.E."/>
            <person name="Lastovica A.J."/>
            <person name="Nelson K.E."/>
        </authorList>
    </citation>
    <scope>NUCLEOTIDE SEQUENCE [LARGE SCALE GENOMIC DNA]</scope>
    <source>
        <strain>ATCC BAA-1458 / RM4099 / 269.97</strain>
    </source>
</reference>
<dbReference type="EMBL" id="CP000768">
    <property type="protein sequence ID" value="ABS44383.1"/>
    <property type="molecule type" value="Genomic_DNA"/>
</dbReference>
<dbReference type="SMR" id="A7H1I0"/>
<dbReference type="KEGG" id="cjd:JJD26997_0113"/>
<dbReference type="HOGENOM" id="CLU_050669_0_1_7"/>
<dbReference type="Proteomes" id="UP000002302">
    <property type="component" value="Chromosome"/>
</dbReference>
<dbReference type="GO" id="GO:0005886">
    <property type="term" value="C:plasma membrane"/>
    <property type="evidence" value="ECO:0007669"/>
    <property type="project" value="UniProtKB-SubCell"/>
</dbReference>
<dbReference type="GO" id="GO:0045259">
    <property type="term" value="C:proton-transporting ATP synthase complex"/>
    <property type="evidence" value="ECO:0007669"/>
    <property type="project" value="UniProtKB-KW"/>
</dbReference>
<dbReference type="GO" id="GO:0005524">
    <property type="term" value="F:ATP binding"/>
    <property type="evidence" value="ECO:0007669"/>
    <property type="project" value="UniProtKB-UniRule"/>
</dbReference>
<dbReference type="GO" id="GO:0046933">
    <property type="term" value="F:proton-transporting ATP synthase activity, rotational mechanism"/>
    <property type="evidence" value="ECO:0007669"/>
    <property type="project" value="UniProtKB-UniRule"/>
</dbReference>
<dbReference type="GO" id="GO:0042777">
    <property type="term" value="P:proton motive force-driven plasma membrane ATP synthesis"/>
    <property type="evidence" value="ECO:0007669"/>
    <property type="project" value="UniProtKB-UniRule"/>
</dbReference>
<dbReference type="CDD" id="cd12151">
    <property type="entry name" value="F1-ATPase_gamma"/>
    <property type="match status" value="1"/>
</dbReference>
<dbReference type="FunFam" id="3.40.1380.10:FF:000006">
    <property type="entry name" value="ATP synthase gamma chain"/>
    <property type="match status" value="1"/>
</dbReference>
<dbReference type="Gene3D" id="3.40.1380.10">
    <property type="match status" value="1"/>
</dbReference>
<dbReference type="Gene3D" id="1.10.287.80">
    <property type="entry name" value="ATP synthase, gamma subunit, helix hairpin domain"/>
    <property type="match status" value="1"/>
</dbReference>
<dbReference type="HAMAP" id="MF_00815">
    <property type="entry name" value="ATP_synth_gamma_bact"/>
    <property type="match status" value="1"/>
</dbReference>
<dbReference type="InterPro" id="IPR035968">
    <property type="entry name" value="ATP_synth_F1_ATPase_gsu"/>
</dbReference>
<dbReference type="InterPro" id="IPR000131">
    <property type="entry name" value="ATP_synth_F1_gsu"/>
</dbReference>
<dbReference type="NCBIfam" id="TIGR01146">
    <property type="entry name" value="ATPsyn_F1gamma"/>
    <property type="match status" value="1"/>
</dbReference>
<dbReference type="PANTHER" id="PTHR11693">
    <property type="entry name" value="ATP SYNTHASE GAMMA CHAIN"/>
    <property type="match status" value="1"/>
</dbReference>
<dbReference type="PANTHER" id="PTHR11693:SF22">
    <property type="entry name" value="ATP SYNTHASE SUBUNIT GAMMA, MITOCHONDRIAL"/>
    <property type="match status" value="1"/>
</dbReference>
<dbReference type="Pfam" id="PF00231">
    <property type="entry name" value="ATP-synt"/>
    <property type="match status" value="1"/>
</dbReference>
<dbReference type="PRINTS" id="PR00126">
    <property type="entry name" value="ATPASEGAMMA"/>
</dbReference>
<dbReference type="SUPFAM" id="SSF52943">
    <property type="entry name" value="ATP synthase (F1-ATPase), gamma subunit"/>
    <property type="match status" value="1"/>
</dbReference>